<feature type="chain" id="PRO_0000293193" description="Small ribosomal subunit protein uS5">
    <location>
        <begin position="1"/>
        <end position="174"/>
    </location>
</feature>
<feature type="domain" description="S5 DRBM" evidence="1">
    <location>
        <begin position="16"/>
        <end position="79"/>
    </location>
</feature>
<protein>
    <recommendedName>
        <fullName evidence="1">Small ribosomal subunit protein uS5</fullName>
    </recommendedName>
    <alternativeName>
        <fullName evidence="2">30S ribosomal protein S5</fullName>
    </alternativeName>
</protein>
<dbReference type="EMBL" id="CP000030">
    <property type="protein sequence ID" value="AAV86805.1"/>
    <property type="molecule type" value="Genomic_DNA"/>
</dbReference>
<dbReference type="RefSeq" id="WP_010265253.1">
    <property type="nucleotide sequence ID" value="NZ_AFMU01000034.1"/>
</dbReference>
<dbReference type="SMR" id="Q5PA75"/>
<dbReference type="GeneID" id="7397861"/>
<dbReference type="KEGG" id="ama:AM894"/>
<dbReference type="PATRIC" id="fig|320483.3.peg.772"/>
<dbReference type="HOGENOM" id="CLU_065898_2_2_5"/>
<dbReference type="GO" id="GO:0015935">
    <property type="term" value="C:small ribosomal subunit"/>
    <property type="evidence" value="ECO:0007669"/>
    <property type="project" value="InterPro"/>
</dbReference>
<dbReference type="GO" id="GO:0019843">
    <property type="term" value="F:rRNA binding"/>
    <property type="evidence" value="ECO:0007669"/>
    <property type="project" value="UniProtKB-UniRule"/>
</dbReference>
<dbReference type="GO" id="GO:0003735">
    <property type="term" value="F:structural constituent of ribosome"/>
    <property type="evidence" value="ECO:0007669"/>
    <property type="project" value="InterPro"/>
</dbReference>
<dbReference type="GO" id="GO:0006412">
    <property type="term" value="P:translation"/>
    <property type="evidence" value="ECO:0007669"/>
    <property type="project" value="UniProtKB-UniRule"/>
</dbReference>
<dbReference type="FunFam" id="3.30.230.10:FF:000002">
    <property type="entry name" value="30S ribosomal protein S5"/>
    <property type="match status" value="1"/>
</dbReference>
<dbReference type="Gene3D" id="3.30.160.20">
    <property type="match status" value="1"/>
</dbReference>
<dbReference type="Gene3D" id="3.30.230.10">
    <property type="match status" value="1"/>
</dbReference>
<dbReference type="HAMAP" id="MF_01307_B">
    <property type="entry name" value="Ribosomal_uS5_B"/>
    <property type="match status" value="1"/>
</dbReference>
<dbReference type="InterPro" id="IPR020568">
    <property type="entry name" value="Ribosomal_Su5_D2-typ_SF"/>
</dbReference>
<dbReference type="InterPro" id="IPR000851">
    <property type="entry name" value="Ribosomal_uS5"/>
</dbReference>
<dbReference type="InterPro" id="IPR005712">
    <property type="entry name" value="Ribosomal_uS5_bac-type"/>
</dbReference>
<dbReference type="InterPro" id="IPR005324">
    <property type="entry name" value="Ribosomal_uS5_C"/>
</dbReference>
<dbReference type="InterPro" id="IPR013810">
    <property type="entry name" value="Ribosomal_uS5_N"/>
</dbReference>
<dbReference type="InterPro" id="IPR014721">
    <property type="entry name" value="Ribsml_uS5_D2-typ_fold_subgr"/>
</dbReference>
<dbReference type="NCBIfam" id="TIGR01021">
    <property type="entry name" value="rpsE_bact"/>
    <property type="match status" value="1"/>
</dbReference>
<dbReference type="PANTHER" id="PTHR48277">
    <property type="entry name" value="MITOCHONDRIAL RIBOSOMAL PROTEIN S5"/>
    <property type="match status" value="1"/>
</dbReference>
<dbReference type="PANTHER" id="PTHR48277:SF1">
    <property type="entry name" value="MITOCHONDRIAL RIBOSOMAL PROTEIN S5"/>
    <property type="match status" value="1"/>
</dbReference>
<dbReference type="Pfam" id="PF00333">
    <property type="entry name" value="Ribosomal_S5"/>
    <property type="match status" value="1"/>
</dbReference>
<dbReference type="Pfam" id="PF03719">
    <property type="entry name" value="Ribosomal_S5_C"/>
    <property type="match status" value="1"/>
</dbReference>
<dbReference type="SUPFAM" id="SSF54768">
    <property type="entry name" value="dsRNA-binding domain-like"/>
    <property type="match status" value="1"/>
</dbReference>
<dbReference type="SUPFAM" id="SSF54211">
    <property type="entry name" value="Ribosomal protein S5 domain 2-like"/>
    <property type="match status" value="1"/>
</dbReference>
<dbReference type="PROSITE" id="PS50881">
    <property type="entry name" value="S5_DSRBD"/>
    <property type="match status" value="1"/>
</dbReference>
<reference key="1">
    <citation type="journal article" date="2005" name="Proc. Natl. Acad. Sci. U.S.A.">
        <title>Complete genome sequencing of Anaplasma marginale reveals that the surface is skewed to two superfamilies of outer membrane proteins.</title>
        <authorList>
            <person name="Brayton K.A."/>
            <person name="Kappmeyer L.S."/>
            <person name="Herndon D.R."/>
            <person name="Dark M.J."/>
            <person name="Tibbals D.L."/>
            <person name="Palmer G.H."/>
            <person name="McGuire T.C."/>
            <person name="Knowles D.P. Jr."/>
        </authorList>
    </citation>
    <scope>NUCLEOTIDE SEQUENCE [LARGE SCALE GENOMIC DNA]</scope>
    <source>
        <strain>St. Maries</strain>
    </source>
</reference>
<organism>
    <name type="scientific">Anaplasma marginale (strain St. Maries)</name>
    <dbReference type="NCBI Taxonomy" id="234826"/>
    <lineage>
        <taxon>Bacteria</taxon>
        <taxon>Pseudomonadati</taxon>
        <taxon>Pseudomonadota</taxon>
        <taxon>Alphaproteobacteria</taxon>
        <taxon>Rickettsiales</taxon>
        <taxon>Anaplasmataceae</taxon>
        <taxon>Anaplasma</taxon>
    </lineage>
</organism>
<comment type="function">
    <text evidence="1">With S4 and S12 plays an important role in translational accuracy.</text>
</comment>
<comment type="function">
    <text evidence="1">Located at the back of the 30S subunit body where it stabilizes the conformation of the head with respect to the body.</text>
</comment>
<comment type="subunit">
    <text evidence="1">Part of the 30S ribosomal subunit. Contacts proteins S4 and S8.</text>
</comment>
<comment type="domain">
    <text>The N-terminal domain interacts with the head of the 30S subunit; the C-terminal domain interacts with the body and contacts protein S4. The interaction surface between S4 and S5 is involved in control of translational fidelity.</text>
</comment>
<comment type="similarity">
    <text evidence="1">Belongs to the universal ribosomal protein uS5 family.</text>
</comment>
<sequence>MSVDKKPRAAHDSHDLSELLVSVRRVSKVVKGGRRFSFSVLVVVGDEKGRVGCGMGKHAEVSEAKIKAVNAAKKSMIRVYLRESRTLHHDVEAKFCASRVVLRSARVGTGIIAGGSVRAVFEVLGVQDVVAKIIGSSNPHSVIYAVFAAFKNMLSPKQVAGKRSRKVGEVIENR</sequence>
<keyword id="KW-0687">Ribonucleoprotein</keyword>
<keyword id="KW-0689">Ribosomal protein</keyword>
<keyword id="KW-0694">RNA-binding</keyword>
<keyword id="KW-0699">rRNA-binding</keyword>
<evidence type="ECO:0000255" key="1">
    <source>
        <dbReference type="HAMAP-Rule" id="MF_01307"/>
    </source>
</evidence>
<evidence type="ECO:0000305" key="2"/>
<name>RS5_ANAMM</name>
<accession>Q5PA75</accession>
<gene>
    <name evidence="1" type="primary">rpsE</name>
    <name type="ordered locus">AM894</name>
</gene>
<proteinExistence type="inferred from homology"/>